<keyword id="KW-0067">ATP-binding</keyword>
<keyword id="KW-0436">Ligase</keyword>
<keyword id="KW-0460">Magnesium</keyword>
<keyword id="KW-0479">Metal-binding</keyword>
<keyword id="KW-0520">NAD</keyword>
<keyword id="KW-0547">Nucleotide-binding</keyword>
<accession>A8F9S0</accession>
<reference key="1">
    <citation type="journal article" date="2007" name="PLoS ONE">
        <title>Paradoxical DNA repair and peroxide resistance gene conservation in Bacillus pumilus SAFR-032.</title>
        <authorList>
            <person name="Gioia J."/>
            <person name="Yerrapragada S."/>
            <person name="Qin X."/>
            <person name="Jiang H."/>
            <person name="Igboeli O.C."/>
            <person name="Muzny D."/>
            <person name="Dugan-Rocha S."/>
            <person name="Ding Y."/>
            <person name="Hawes A."/>
            <person name="Liu W."/>
            <person name="Perez L."/>
            <person name="Kovar C."/>
            <person name="Dinh H."/>
            <person name="Lee S."/>
            <person name="Nazareth L."/>
            <person name="Blyth P."/>
            <person name="Holder M."/>
            <person name="Buhay C."/>
            <person name="Tirumalai M.R."/>
            <person name="Liu Y."/>
            <person name="Dasgupta I."/>
            <person name="Bokhetache L."/>
            <person name="Fujita M."/>
            <person name="Karouia F."/>
            <person name="Eswara Moorthy P."/>
            <person name="Siefert J."/>
            <person name="Uzman A."/>
            <person name="Buzumbo P."/>
            <person name="Verma A."/>
            <person name="Zwiya H."/>
            <person name="McWilliams B.D."/>
            <person name="Olowu A."/>
            <person name="Clinkenbeard K.D."/>
            <person name="Newcombe D."/>
            <person name="Golebiewski L."/>
            <person name="Petrosino J.F."/>
            <person name="Nicholson W.L."/>
            <person name="Fox G.E."/>
            <person name="Venkateswaran K."/>
            <person name="Highlander S.K."/>
            <person name="Weinstock G.M."/>
        </authorList>
    </citation>
    <scope>NUCLEOTIDE SEQUENCE [LARGE SCALE GENOMIC DNA]</scope>
    <source>
        <strain>SAFR-032</strain>
    </source>
</reference>
<organism>
    <name type="scientific">Bacillus pumilus (strain SAFR-032)</name>
    <dbReference type="NCBI Taxonomy" id="315750"/>
    <lineage>
        <taxon>Bacteria</taxon>
        <taxon>Bacillati</taxon>
        <taxon>Bacillota</taxon>
        <taxon>Bacilli</taxon>
        <taxon>Bacillales</taxon>
        <taxon>Bacillaceae</taxon>
        <taxon>Bacillus</taxon>
    </lineage>
</organism>
<name>NADE_BACP2</name>
<protein>
    <recommendedName>
        <fullName evidence="1">NH(3)-dependent NAD(+) synthetase</fullName>
        <ecNumber evidence="1">6.3.1.5</ecNumber>
    </recommendedName>
</protein>
<comment type="function">
    <text evidence="1">Catalyzes the ATP-dependent amidation of deamido-NAD to form NAD. Uses ammonia as a nitrogen source.</text>
</comment>
<comment type="catalytic activity">
    <reaction evidence="1">
        <text>deamido-NAD(+) + NH4(+) + ATP = AMP + diphosphate + NAD(+) + H(+)</text>
        <dbReference type="Rhea" id="RHEA:21188"/>
        <dbReference type="ChEBI" id="CHEBI:15378"/>
        <dbReference type="ChEBI" id="CHEBI:28938"/>
        <dbReference type="ChEBI" id="CHEBI:30616"/>
        <dbReference type="ChEBI" id="CHEBI:33019"/>
        <dbReference type="ChEBI" id="CHEBI:57540"/>
        <dbReference type="ChEBI" id="CHEBI:58437"/>
        <dbReference type="ChEBI" id="CHEBI:456215"/>
        <dbReference type="EC" id="6.3.1.5"/>
    </reaction>
</comment>
<comment type="pathway">
    <text evidence="1">Cofactor biosynthesis; NAD(+) biosynthesis; NAD(+) from deamido-NAD(+) (ammonia route): step 1/1.</text>
</comment>
<comment type="subunit">
    <text evidence="1">Homodimer.</text>
</comment>
<comment type="similarity">
    <text evidence="1">Belongs to the NAD synthetase family.</text>
</comment>
<proteinExistence type="inferred from homology"/>
<evidence type="ECO:0000255" key="1">
    <source>
        <dbReference type="HAMAP-Rule" id="MF_00193"/>
    </source>
</evidence>
<gene>
    <name evidence="1" type="primary">nadE</name>
    <name type="ordered locus">BPUM_0289</name>
</gene>
<feature type="chain" id="PRO_1000077538" description="NH(3)-dependent NAD(+) synthetase">
    <location>
        <begin position="1"/>
        <end position="273"/>
    </location>
</feature>
<feature type="binding site" evidence="1">
    <location>
        <begin position="45"/>
        <end position="52"/>
    </location>
    <ligand>
        <name>ATP</name>
        <dbReference type="ChEBI" id="CHEBI:30616"/>
    </ligand>
</feature>
<feature type="binding site" evidence="1">
    <location>
        <position position="51"/>
    </location>
    <ligand>
        <name>Mg(2+)</name>
        <dbReference type="ChEBI" id="CHEBI:18420"/>
    </ligand>
</feature>
<feature type="binding site" evidence="1">
    <location>
        <position position="139"/>
    </location>
    <ligand>
        <name>deamido-NAD(+)</name>
        <dbReference type="ChEBI" id="CHEBI:58437"/>
    </ligand>
</feature>
<feature type="binding site" evidence="1">
    <location>
        <position position="159"/>
    </location>
    <ligand>
        <name>ATP</name>
        <dbReference type="ChEBI" id="CHEBI:30616"/>
    </ligand>
</feature>
<feature type="binding site" evidence="1">
    <location>
        <position position="164"/>
    </location>
    <ligand>
        <name>Mg(2+)</name>
        <dbReference type="ChEBI" id="CHEBI:18420"/>
    </ligand>
</feature>
<feature type="binding site" evidence="1">
    <location>
        <position position="172"/>
    </location>
    <ligand>
        <name>deamido-NAD(+)</name>
        <dbReference type="ChEBI" id="CHEBI:58437"/>
    </ligand>
</feature>
<feature type="binding site" evidence="1">
    <location>
        <position position="179"/>
    </location>
    <ligand>
        <name>deamido-NAD(+)</name>
        <dbReference type="ChEBI" id="CHEBI:58437"/>
    </ligand>
</feature>
<feature type="binding site" evidence="1">
    <location>
        <position position="188"/>
    </location>
    <ligand>
        <name>ATP</name>
        <dbReference type="ChEBI" id="CHEBI:30616"/>
    </ligand>
</feature>
<feature type="binding site" evidence="1">
    <location>
        <position position="210"/>
    </location>
    <ligand>
        <name>ATP</name>
        <dbReference type="ChEBI" id="CHEBI:30616"/>
    </ligand>
</feature>
<feature type="binding site" evidence="1">
    <location>
        <begin position="259"/>
        <end position="260"/>
    </location>
    <ligand>
        <name>deamido-NAD(+)</name>
        <dbReference type="ChEBI" id="CHEBI:58437"/>
    </ligand>
</feature>
<dbReference type="EC" id="6.3.1.5" evidence="1"/>
<dbReference type="EMBL" id="CP000813">
    <property type="protein sequence ID" value="ABV60987.1"/>
    <property type="molecule type" value="Genomic_DNA"/>
</dbReference>
<dbReference type="RefSeq" id="WP_012008859.1">
    <property type="nucleotide sequence ID" value="NZ_VEIS01000004.1"/>
</dbReference>
<dbReference type="SMR" id="A8F9S0"/>
<dbReference type="STRING" id="315750.BPUM_0289"/>
<dbReference type="GeneID" id="5619540"/>
<dbReference type="KEGG" id="bpu:BPUM_0289"/>
<dbReference type="eggNOG" id="COG0171">
    <property type="taxonomic scope" value="Bacteria"/>
</dbReference>
<dbReference type="HOGENOM" id="CLU_059327_3_0_9"/>
<dbReference type="OrthoDB" id="9803818at2"/>
<dbReference type="UniPathway" id="UPA00253">
    <property type="reaction ID" value="UER00333"/>
</dbReference>
<dbReference type="Proteomes" id="UP000001355">
    <property type="component" value="Chromosome"/>
</dbReference>
<dbReference type="GO" id="GO:0005737">
    <property type="term" value="C:cytoplasm"/>
    <property type="evidence" value="ECO:0007669"/>
    <property type="project" value="InterPro"/>
</dbReference>
<dbReference type="GO" id="GO:0005524">
    <property type="term" value="F:ATP binding"/>
    <property type="evidence" value="ECO:0007669"/>
    <property type="project" value="UniProtKB-UniRule"/>
</dbReference>
<dbReference type="GO" id="GO:0004359">
    <property type="term" value="F:glutaminase activity"/>
    <property type="evidence" value="ECO:0007669"/>
    <property type="project" value="InterPro"/>
</dbReference>
<dbReference type="GO" id="GO:0046872">
    <property type="term" value="F:metal ion binding"/>
    <property type="evidence" value="ECO:0007669"/>
    <property type="project" value="UniProtKB-KW"/>
</dbReference>
<dbReference type="GO" id="GO:0003952">
    <property type="term" value="F:NAD+ synthase (glutamine-hydrolyzing) activity"/>
    <property type="evidence" value="ECO:0007669"/>
    <property type="project" value="InterPro"/>
</dbReference>
<dbReference type="GO" id="GO:0008795">
    <property type="term" value="F:NAD+ synthase activity"/>
    <property type="evidence" value="ECO:0007669"/>
    <property type="project" value="UniProtKB-UniRule"/>
</dbReference>
<dbReference type="GO" id="GO:0009435">
    <property type="term" value="P:NAD biosynthetic process"/>
    <property type="evidence" value="ECO:0007669"/>
    <property type="project" value="UniProtKB-UniRule"/>
</dbReference>
<dbReference type="CDD" id="cd00553">
    <property type="entry name" value="NAD_synthase"/>
    <property type="match status" value="1"/>
</dbReference>
<dbReference type="FunFam" id="3.40.50.620:FF:000015">
    <property type="entry name" value="NH(3)-dependent NAD(+) synthetase"/>
    <property type="match status" value="1"/>
</dbReference>
<dbReference type="Gene3D" id="3.40.50.620">
    <property type="entry name" value="HUPs"/>
    <property type="match status" value="1"/>
</dbReference>
<dbReference type="HAMAP" id="MF_00193">
    <property type="entry name" value="NadE_ammonia_dep"/>
    <property type="match status" value="1"/>
</dbReference>
<dbReference type="InterPro" id="IPR022310">
    <property type="entry name" value="NAD/GMP_synthase"/>
</dbReference>
<dbReference type="InterPro" id="IPR003694">
    <property type="entry name" value="NAD_synthase"/>
</dbReference>
<dbReference type="InterPro" id="IPR022926">
    <property type="entry name" value="NH(3)-dep_NAD(+)_synth"/>
</dbReference>
<dbReference type="InterPro" id="IPR014729">
    <property type="entry name" value="Rossmann-like_a/b/a_fold"/>
</dbReference>
<dbReference type="NCBIfam" id="TIGR00552">
    <property type="entry name" value="nadE"/>
    <property type="match status" value="1"/>
</dbReference>
<dbReference type="NCBIfam" id="NF001979">
    <property type="entry name" value="PRK00768.1"/>
    <property type="match status" value="1"/>
</dbReference>
<dbReference type="PANTHER" id="PTHR23090">
    <property type="entry name" value="NH 3 /GLUTAMINE-DEPENDENT NAD + SYNTHETASE"/>
    <property type="match status" value="1"/>
</dbReference>
<dbReference type="PANTHER" id="PTHR23090:SF7">
    <property type="entry name" value="NH(3)-DEPENDENT NAD(+) SYNTHETASE"/>
    <property type="match status" value="1"/>
</dbReference>
<dbReference type="Pfam" id="PF02540">
    <property type="entry name" value="NAD_synthase"/>
    <property type="match status" value="1"/>
</dbReference>
<dbReference type="SUPFAM" id="SSF52402">
    <property type="entry name" value="Adenine nucleotide alpha hydrolases-like"/>
    <property type="match status" value="1"/>
</dbReference>
<sequence>MSLQKKISQELHVQPSIDPKQEIEKRVGFLKDYLKKTGAKGFVLGISGGQDSTLAGRLAQLAASELRQEGKEDAVFIAVRLPHGVQQDEGDAQLALSFIQPDKSWKYDIAPAVTAFSEQYQKDTGGPLSDFNKGNVKARMRMIAQYAVGGEEGLLVIGTDHAAEAVTGFFTKYGDGGADVLPLTGLTKRQGRTLLEALQAPERLYLKKPTADLLDDKPQQTDETELGITYNEIDDYLEGKPVSEQAVEAIEKRYVQSEHKRQVPASMFDDWWK</sequence>